<sequence>MALKSPAFRRKFPLLVTGGLLALQPLATSYVVAAEQFDCQVSAAGGWDCKPKTPVNNLPPRPVHEGAAVSSGTEAAGEAETADRPVLVTEAKGRGLKSRSEDYSHLDWVPREKLTAAQLAETGPYCGGAYIEPTRPGMADTTPKDESPTYINAKVSKYQQEQQVATLAGDVVMRQGSMQAEADEANLYQAENRGELKGNVKIRDNGSLVVGDEAQIQLDTGEAQVDNAEYVMHKSHIRGSALYAKRGENAIIRLKDGTYTTCEPGSNAWQLKGNNITLNPATGFGTATNVTLRVKDFPVFYTPYIYFPIDDRRQSGFLPPSFSTSSDTGFMLVTPYYFNLAPNYDATLYPRYMAKRGLLMEGEFRYLTPSSEGQFGGAYLNDKNDDRKDQTDYKDQRWMVNWQHKGGLDERLMTEVDYTDISDPFYFQDLESDQIGVESRDFLNQQGALTYRGDSYTARLNVHAYEAATISQITPYDRLPQITLNGVLPYQPGGLNFAYETEAARFERDLKNDTVFDKDGNLDLTAGPDGRRLDENIQGIERANGTRLNVAPSISYPMTASYGFLTPKLKYAYTQYDLDLDSKGKADAIALQTANPDAYGSYDSSVSRDVPIFSVDSGLYFDRNTSLFGNNYRQTLEPRMFYLYVPYKDQKDIPLFDTGETLFSYDSLFRDNRFSGTDRIGDENKLSLGVTTRWIEDNGFERQNFSIGQAYYFKDRKVQLPGIDYRTRKDAQSDVSPYALVYNYYFNRDWRFNSDFNWDPDSRSTRSGSAMFHYQPEDNPNKIVNLGYRYRNDTIAYDSTTGTWKVGGGDYGTPGDPNYIKDYYKIQQHDFSVIWPIVPQWNVIARWQHDYNRNRTLEAMGGFEYDNCCWKLRLINRYWIDYDDFSQALPQNEKGDHGVFLQIVLKGLGGVVGNKVESFLDQGIQGYREREDQAY</sequence>
<reference key="1">
    <citation type="submission" date="2007-05" db="EMBL/GenBank/DDBJ databases">
        <title>Complete sequence of Pseudomonas putida F1.</title>
        <authorList>
            <consortium name="US DOE Joint Genome Institute"/>
            <person name="Copeland A."/>
            <person name="Lucas S."/>
            <person name="Lapidus A."/>
            <person name="Barry K."/>
            <person name="Detter J.C."/>
            <person name="Glavina del Rio T."/>
            <person name="Hammon N."/>
            <person name="Israni S."/>
            <person name="Dalin E."/>
            <person name="Tice H."/>
            <person name="Pitluck S."/>
            <person name="Chain P."/>
            <person name="Malfatti S."/>
            <person name="Shin M."/>
            <person name="Vergez L."/>
            <person name="Schmutz J."/>
            <person name="Larimer F."/>
            <person name="Land M."/>
            <person name="Hauser L."/>
            <person name="Kyrpides N."/>
            <person name="Lykidis A."/>
            <person name="Parales R."/>
            <person name="Richardson P."/>
        </authorList>
    </citation>
    <scope>NUCLEOTIDE SEQUENCE [LARGE SCALE GENOMIC DNA]</scope>
    <source>
        <strain>ATCC 700007 / DSM 6899 / JCM 31910 / BCRC 17059 / LMG 24140 / F1</strain>
    </source>
</reference>
<feature type="signal peptide" evidence="1">
    <location>
        <begin position="1"/>
        <end position="33"/>
    </location>
</feature>
<feature type="chain" id="PRO_5000251600" description="LPS-assembly protein LptD">
    <location>
        <begin position="34"/>
        <end position="935"/>
    </location>
</feature>
<feature type="region of interest" description="Disordered" evidence="2">
    <location>
        <begin position="52"/>
        <end position="85"/>
    </location>
</feature>
<feature type="compositionally biased region" description="Low complexity" evidence="2">
    <location>
        <begin position="65"/>
        <end position="79"/>
    </location>
</feature>
<dbReference type="EMBL" id="CP000712">
    <property type="protein sequence ID" value="ABQ76608.1"/>
    <property type="molecule type" value="Genomic_DNA"/>
</dbReference>
<dbReference type="SMR" id="A5VXJ8"/>
<dbReference type="KEGG" id="ppf:Pput_0438"/>
<dbReference type="eggNOG" id="COG1452">
    <property type="taxonomic scope" value="Bacteria"/>
</dbReference>
<dbReference type="HOGENOM" id="CLU_009039_1_0_6"/>
<dbReference type="GO" id="GO:0009279">
    <property type="term" value="C:cell outer membrane"/>
    <property type="evidence" value="ECO:0007669"/>
    <property type="project" value="UniProtKB-SubCell"/>
</dbReference>
<dbReference type="GO" id="GO:1990351">
    <property type="term" value="C:transporter complex"/>
    <property type="evidence" value="ECO:0007669"/>
    <property type="project" value="TreeGrafter"/>
</dbReference>
<dbReference type="GO" id="GO:0043165">
    <property type="term" value="P:Gram-negative-bacterium-type cell outer membrane assembly"/>
    <property type="evidence" value="ECO:0007669"/>
    <property type="project" value="UniProtKB-UniRule"/>
</dbReference>
<dbReference type="GO" id="GO:0015920">
    <property type="term" value="P:lipopolysaccharide transport"/>
    <property type="evidence" value="ECO:0007669"/>
    <property type="project" value="InterPro"/>
</dbReference>
<dbReference type="Gene3D" id="2.60.450.10">
    <property type="entry name" value="Lipopolysaccharide (LPS) transport protein A like domain"/>
    <property type="match status" value="1"/>
</dbReference>
<dbReference type="HAMAP" id="MF_01411">
    <property type="entry name" value="LPS_assembly_LptD"/>
    <property type="match status" value="1"/>
</dbReference>
<dbReference type="InterPro" id="IPR020889">
    <property type="entry name" value="LipoPS_assembly_LptD"/>
</dbReference>
<dbReference type="InterPro" id="IPR050218">
    <property type="entry name" value="LptD"/>
</dbReference>
<dbReference type="InterPro" id="IPR007543">
    <property type="entry name" value="LptD_C"/>
</dbReference>
<dbReference type="InterPro" id="IPR005653">
    <property type="entry name" value="OstA-like_N"/>
</dbReference>
<dbReference type="PANTHER" id="PTHR30189">
    <property type="entry name" value="LPS-ASSEMBLY PROTEIN"/>
    <property type="match status" value="1"/>
</dbReference>
<dbReference type="PANTHER" id="PTHR30189:SF1">
    <property type="entry name" value="LPS-ASSEMBLY PROTEIN LPTD"/>
    <property type="match status" value="1"/>
</dbReference>
<dbReference type="Pfam" id="PF04453">
    <property type="entry name" value="LptD"/>
    <property type="match status" value="1"/>
</dbReference>
<dbReference type="Pfam" id="PF03968">
    <property type="entry name" value="LptD_N"/>
    <property type="match status" value="1"/>
</dbReference>
<protein>
    <recommendedName>
        <fullName evidence="1">LPS-assembly protein LptD</fullName>
    </recommendedName>
</protein>
<accession>A5VXJ8</accession>
<proteinExistence type="inferred from homology"/>
<organism>
    <name type="scientific">Pseudomonas putida (strain ATCC 700007 / DSM 6899 / JCM 31910 / BCRC 17059 / LMG 24140 / F1)</name>
    <dbReference type="NCBI Taxonomy" id="351746"/>
    <lineage>
        <taxon>Bacteria</taxon>
        <taxon>Pseudomonadati</taxon>
        <taxon>Pseudomonadota</taxon>
        <taxon>Gammaproteobacteria</taxon>
        <taxon>Pseudomonadales</taxon>
        <taxon>Pseudomonadaceae</taxon>
        <taxon>Pseudomonas</taxon>
    </lineage>
</organism>
<name>LPTD_PSEP1</name>
<comment type="function">
    <text evidence="1">Together with LptE, is involved in the assembly of lipopolysaccharide (LPS) at the surface of the outer membrane.</text>
</comment>
<comment type="subunit">
    <text evidence="1">Component of the lipopolysaccharide transport and assembly complex. Interacts with LptE and LptA.</text>
</comment>
<comment type="subcellular location">
    <subcellularLocation>
        <location evidence="1">Cell outer membrane</location>
    </subcellularLocation>
</comment>
<comment type="similarity">
    <text evidence="1">Belongs to the LptD family.</text>
</comment>
<gene>
    <name evidence="1" type="primary">lptD</name>
    <name type="synonym">imp</name>
    <name type="synonym">ostA</name>
    <name type="ordered locus">Pput_0438</name>
</gene>
<evidence type="ECO:0000255" key="1">
    <source>
        <dbReference type="HAMAP-Rule" id="MF_01411"/>
    </source>
</evidence>
<evidence type="ECO:0000256" key="2">
    <source>
        <dbReference type="SAM" id="MobiDB-lite"/>
    </source>
</evidence>
<keyword id="KW-0998">Cell outer membrane</keyword>
<keyword id="KW-0472">Membrane</keyword>
<keyword id="KW-0732">Signal</keyword>